<name>NDUS2_PYLLI</name>
<comment type="function">
    <text evidence="1">Core subunit of the mitochondrial membrane respiratory chain NADH dehydrogenase (Complex I) that is believed to belong to the minimal assembly required for catalysis. Complex I functions in the transfer of electrons from NADH to the respiratory chain. The immediate electron acceptor for the enzyme is believed to be ubiquinone (By similarity). Component of the iron-sulfur (IP) fragment of the enzyme. Component of the iron-sulfur (IP) fragment of the enzyme.</text>
</comment>
<comment type="catalytic activity">
    <reaction>
        <text>a ubiquinone + NADH + 5 H(+)(in) = a ubiquinol + NAD(+) + 4 H(+)(out)</text>
        <dbReference type="Rhea" id="RHEA:29091"/>
        <dbReference type="Rhea" id="RHEA-COMP:9565"/>
        <dbReference type="Rhea" id="RHEA-COMP:9566"/>
        <dbReference type="ChEBI" id="CHEBI:15378"/>
        <dbReference type="ChEBI" id="CHEBI:16389"/>
        <dbReference type="ChEBI" id="CHEBI:17976"/>
        <dbReference type="ChEBI" id="CHEBI:57540"/>
        <dbReference type="ChEBI" id="CHEBI:57945"/>
        <dbReference type="EC" id="7.1.1.2"/>
    </reaction>
</comment>
<comment type="subcellular location">
    <subcellularLocation>
        <location>Mitochondrion</location>
    </subcellularLocation>
</comment>
<comment type="similarity">
    <text evidence="2">Belongs to the complex I 49 kDa subunit family.</text>
</comment>
<accession>Q37720</accession>
<organism>
    <name type="scientific">Pylaiella littoralis</name>
    <name type="common">Seaweed</name>
    <name type="synonym">Conferva littoralis</name>
    <dbReference type="NCBI Taxonomy" id="2885"/>
    <lineage>
        <taxon>Eukaryota</taxon>
        <taxon>Sar</taxon>
        <taxon>Stramenopiles</taxon>
        <taxon>Ochrophyta</taxon>
        <taxon>PX clade</taxon>
        <taxon>Phaeophyceae</taxon>
        <taxon>Ectocarpales</taxon>
        <taxon>Acinetosporaceae</taxon>
        <taxon>Pylaiella</taxon>
    </lineage>
</organism>
<proteinExistence type="inferred from homology"/>
<protein>
    <recommendedName>
        <fullName>NADH-ubiquinone oxidoreductase 49 kDa subunit</fullName>
        <ecNumber>7.1.1.2</ecNumber>
    </recommendedName>
    <alternativeName>
        <fullName>NADH dehydrogenase subunit 7</fullName>
    </alternativeName>
</protein>
<keyword id="KW-0249">Electron transport</keyword>
<keyword id="KW-0496">Mitochondrion</keyword>
<keyword id="KW-0520">NAD</keyword>
<keyword id="KW-0560">Oxidoreductase</keyword>
<keyword id="KW-0679">Respiratory chain</keyword>
<keyword id="KW-1278">Translocase</keyword>
<keyword id="KW-0813">Transport</keyword>
<keyword id="KW-0830">Ubiquinone</keyword>
<reference key="1">
    <citation type="journal article" date="1995" name="Plant Physiol. Biochem.">
        <title>Characterisation of the cox3, nad7 and atp6 genes from the mitochondrial genome of the brown alga Pylaiella littoralis.</title>
        <authorList>
            <person name="Fontaine J.-M."/>
            <person name="Rousvoal S."/>
            <person name="Delaroque N."/>
            <person name="Loiseaux-De Goer S."/>
        </authorList>
    </citation>
    <scope>NUCLEOTIDE SEQUENCE [GENOMIC DNA]</scope>
</reference>
<evidence type="ECO:0000250" key="1"/>
<evidence type="ECO:0000305" key="2"/>
<feature type="chain" id="PRO_0000118592" description="NADH-ubiquinone oxidoreductase 49 kDa subunit">
    <location>
        <begin position="1"/>
        <end position="398"/>
    </location>
</feature>
<geneLocation type="mitochondrion"/>
<sequence>MALKKKEFNKKLKHFTINFGPQHPAAHGVLRLILELNGEVVQRADPHIGLLHRGTEKLIEAKTYFQALPYFDRLDYVSMMCQEHTYALSVENLLQVSIPRRAQFIRVLFAEITRILNHLLAVGCHAMDVGAMTPFLWAFEEREKLMEFYERVSGARMHASYFRPGGVSQDISVGLVDDIFAFVAQFGQRLDEIEEMLTDNRIWQERLVDIGVVSAQEAIDWGFSGVMLRGSGIRWDLRKNEPYEIYSDLNFQGVVGKTGDCYDRYLARVEEMRQSLSIIYQCLNKMPRGSVKIDDAKISPPSRSEVKQSMESLIHHFKLYTEGVFVPAGETYTATEAPKGEFGVYLVSKGSSRPYRCKIKAPGFSHLQGLNFMACSHMLADVVTIIGTQDIVFGEVDR</sequence>
<dbReference type="EC" id="7.1.1.2"/>
<dbReference type="EMBL" id="Z48623">
    <property type="protein sequence ID" value="CAA88557.1"/>
    <property type="molecule type" value="Genomic_DNA"/>
</dbReference>
<dbReference type="PIR" id="S53054">
    <property type="entry name" value="S53054"/>
</dbReference>
<dbReference type="RefSeq" id="NP_150429.1">
    <property type="nucleotide sequence ID" value="NC_003055.1"/>
</dbReference>
<dbReference type="SMR" id="Q37720"/>
<dbReference type="GeneID" id="803753"/>
<dbReference type="GO" id="GO:0005739">
    <property type="term" value="C:mitochondrion"/>
    <property type="evidence" value="ECO:0007669"/>
    <property type="project" value="UniProtKB-SubCell"/>
</dbReference>
<dbReference type="GO" id="GO:0051287">
    <property type="term" value="F:NAD binding"/>
    <property type="evidence" value="ECO:0007669"/>
    <property type="project" value="InterPro"/>
</dbReference>
<dbReference type="GO" id="GO:0008137">
    <property type="term" value="F:NADH dehydrogenase (ubiquinone) activity"/>
    <property type="evidence" value="ECO:0007669"/>
    <property type="project" value="UniProtKB-EC"/>
</dbReference>
<dbReference type="GO" id="GO:0048038">
    <property type="term" value="F:quinone binding"/>
    <property type="evidence" value="ECO:0007669"/>
    <property type="project" value="InterPro"/>
</dbReference>
<dbReference type="GO" id="GO:0006120">
    <property type="term" value="P:mitochondrial electron transport, NADH to ubiquinone"/>
    <property type="evidence" value="ECO:0007669"/>
    <property type="project" value="TreeGrafter"/>
</dbReference>
<dbReference type="FunFam" id="1.10.645.10:FF:000005">
    <property type="entry name" value="NADH-quinone oxidoreductase subunit D"/>
    <property type="match status" value="1"/>
</dbReference>
<dbReference type="Gene3D" id="1.10.645.10">
    <property type="entry name" value="Cytochrome-c3 Hydrogenase, chain B"/>
    <property type="match status" value="1"/>
</dbReference>
<dbReference type="HAMAP" id="MF_01358">
    <property type="entry name" value="NDH1_NuoD"/>
    <property type="match status" value="1"/>
</dbReference>
<dbReference type="InterPro" id="IPR001135">
    <property type="entry name" value="NADH_Q_OxRdtase_suD"/>
</dbReference>
<dbReference type="InterPro" id="IPR014029">
    <property type="entry name" value="NADH_UbQ_OxRdtase_49kDa_CS"/>
</dbReference>
<dbReference type="InterPro" id="IPR022885">
    <property type="entry name" value="NDH1_su_D/H"/>
</dbReference>
<dbReference type="InterPro" id="IPR029014">
    <property type="entry name" value="NiFe-Hase_large"/>
</dbReference>
<dbReference type="NCBIfam" id="TIGR01962">
    <property type="entry name" value="NuoD"/>
    <property type="match status" value="1"/>
</dbReference>
<dbReference type="NCBIfam" id="NF004739">
    <property type="entry name" value="PRK06075.1"/>
    <property type="match status" value="1"/>
</dbReference>
<dbReference type="PANTHER" id="PTHR11993:SF10">
    <property type="entry name" value="NADH DEHYDROGENASE [UBIQUINONE] IRON-SULFUR PROTEIN 2, MITOCHONDRIAL"/>
    <property type="match status" value="1"/>
</dbReference>
<dbReference type="PANTHER" id="PTHR11993">
    <property type="entry name" value="NADH-UBIQUINONE OXIDOREDUCTASE 49 KDA SUBUNIT"/>
    <property type="match status" value="1"/>
</dbReference>
<dbReference type="Pfam" id="PF00346">
    <property type="entry name" value="Complex1_49kDa"/>
    <property type="match status" value="1"/>
</dbReference>
<dbReference type="SUPFAM" id="SSF56762">
    <property type="entry name" value="HydB/Nqo4-like"/>
    <property type="match status" value="1"/>
</dbReference>
<dbReference type="PROSITE" id="PS00535">
    <property type="entry name" value="COMPLEX1_49K"/>
    <property type="match status" value="1"/>
</dbReference>
<gene>
    <name type="primary">NAD7</name>
</gene>